<keyword id="KW-0130">Cell adhesion</keyword>
<keyword id="KW-1015">Disulfide bond</keyword>
<keyword id="KW-0245">EGF-like domain</keyword>
<keyword id="KW-0325">Glycoprotein</keyword>
<keyword id="KW-0472">Membrane</keyword>
<keyword id="KW-0597">Phosphoprotein</keyword>
<keyword id="KW-1185">Reference proteome</keyword>
<keyword id="KW-0732">Signal</keyword>
<keyword id="KW-0812">Transmembrane</keyword>
<keyword id="KW-1133">Transmembrane helix</keyword>
<protein>
    <recommendedName>
        <fullName>Disintegrin and metalloproteinase domain-containing protein 2</fullName>
        <shortName>ADAM 2</shortName>
    </recommendedName>
    <alternativeName>
        <fullName>Fertilin subunit beta</fullName>
    </alternativeName>
    <alternativeName>
        <fullName>PH-30</fullName>
        <shortName>PH30</shortName>
    </alternativeName>
    <alternativeName>
        <fullName>PH30-beta</fullName>
    </alternativeName>
</protein>
<organism>
    <name type="scientific">Macaca fascicularis</name>
    <name type="common">Crab-eating macaque</name>
    <name type="synonym">Cynomolgus monkey</name>
    <dbReference type="NCBI Taxonomy" id="9541"/>
    <lineage>
        <taxon>Eukaryota</taxon>
        <taxon>Metazoa</taxon>
        <taxon>Chordata</taxon>
        <taxon>Craniata</taxon>
        <taxon>Vertebrata</taxon>
        <taxon>Euteleostomi</taxon>
        <taxon>Mammalia</taxon>
        <taxon>Eutheria</taxon>
        <taxon>Euarchontoglires</taxon>
        <taxon>Primates</taxon>
        <taxon>Haplorrhini</taxon>
        <taxon>Catarrhini</taxon>
        <taxon>Cercopithecidae</taxon>
        <taxon>Cercopithecinae</taxon>
        <taxon>Macaca</taxon>
    </lineage>
</organism>
<reference key="1">
    <citation type="journal article" date="1995" name="Biochem. J.">
        <title>Cloning and analysis of monkey fertilin reveals novel alpha subunit isoforms.</title>
        <authorList>
            <person name="Perry A.C.F."/>
            <person name="Gichuhi P.M."/>
            <person name="Jones R."/>
            <person name="Hall L."/>
        </authorList>
    </citation>
    <scope>NUCLEOTIDE SEQUENCE [MRNA]</scope>
    <source>
        <tissue>Testis</tissue>
    </source>
</reference>
<reference key="2">
    <citation type="journal article" date="1996" name="Mol. Reprod. Dev.">
        <title>Initial evaluation of fertilin as an immunocontraceptive antigen and molecular cloning of the cynomolgus monkey fertilin beta subunit.</title>
        <authorList>
            <person name="Ramarao C.S."/>
            <person name="Myles D.G."/>
            <person name="White J.M."/>
            <person name="Primakoff P."/>
        </authorList>
    </citation>
    <scope>NUCLEOTIDE SEQUENCE [MRNA]</scope>
</reference>
<reference key="3">
    <citation type="submission" date="2005-06" db="EMBL/GenBank/DDBJ databases">
        <title>DNA sequences of macaque genes expressed in brain or testis and its evolutionary implications.</title>
        <authorList>
            <consortium name="International consortium for macaque cDNA sequencing and analysis"/>
        </authorList>
    </citation>
    <scope>NUCLEOTIDE SEQUENCE [LARGE SCALE MRNA]</scope>
    <source>
        <tissue>Testis</tissue>
    </source>
</reference>
<evidence type="ECO:0000250" key="1"/>
<evidence type="ECO:0000250" key="2">
    <source>
        <dbReference type="UniProtKB" id="Q60718"/>
    </source>
</evidence>
<evidence type="ECO:0000255" key="3"/>
<evidence type="ECO:0000255" key="4">
    <source>
        <dbReference type="PROSITE-ProRule" id="PRU00068"/>
    </source>
</evidence>
<evidence type="ECO:0000255" key="5">
    <source>
        <dbReference type="PROSITE-ProRule" id="PRU00076"/>
    </source>
</evidence>
<evidence type="ECO:0000255" key="6">
    <source>
        <dbReference type="PROSITE-ProRule" id="PRU00276"/>
    </source>
</evidence>
<evidence type="ECO:0000305" key="7"/>
<sequence length="735" mass="82372">MWRVLFLLSGLGGLWMDSNFDSLPVQITVPEKIRSIIKEEIESQVSYKIVIEGKPYTANLMQKNFLSHNFRVYSYNGTGIMKPLDQDFQNFCHYQGYIEGYPKSVAMVSTCTGLRGLLQFENVSYGIEPLESSVGFEHVIYQVKHKKADVSLYNEKDIESRDLSFKLQSIEPQKDFAKYIEMHVVVEKQLYNHMGSGTTVVTQKIFQLIGLTNAIFVSLNITVILSSLELWIDENKIATTGDAKELLHTFLRWKRSYLVLRPHDVAFLLVYREKSNYVGATFQGKMCDANYAGGVLLHPRTISLESLAVILAQLLSLSMGIPYDDINQCQCSAAVCIMNPEAIHFSGVKIFSNCSIEDFAHFISKQKSQCLHNQPRLDPFFKQQAVCGNAKLEAGEECDCGTQQNCFLLGAKCCDTATCRFKAGSNCAEGPCCENCLFMSQERVCRPSFDECDLPEYCNGTSASCPENHFIQTGHPCGPNQWVCIDGVCMNGDKQCMDTFGGEAEFGPTECYSYLNSKTDVSGNCGIGDSGYTQCEADNLQCGKLICKYAGEFLLQIPRATIIYANISGHLCVAVEFASDHEDSHKMWIKDGTSCGSNKVCKNQRCVSSSYLGYDCTTDKCNHRGVCNNKKHCHCSASYLPPDCSVQSDTSPGGSIDSGNFPLVAVPARLPERRHMENVYHSKPMRWPLFLFIPFFIIFCVLIAIMVKVHFQRKKWRTEDYSTDEQPESESEPKG</sequence>
<dbReference type="EMBL" id="X77653">
    <property type="protein sequence ID" value="CAA54733.1"/>
    <property type="molecule type" value="mRNA"/>
</dbReference>
<dbReference type="EMBL" id="U33959">
    <property type="protein sequence ID" value="AAB52699.1"/>
    <property type="molecule type" value="mRNA"/>
</dbReference>
<dbReference type="EMBL" id="AB169114">
    <property type="protein sequence ID" value="BAE01208.1"/>
    <property type="molecule type" value="mRNA"/>
</dbReference>
<dbReference type="PIR" id="G02937">
    <property type="entry name" value="G02937"/>
</dbReference>
<dbReference type="RefSeq" id="NP_001270782.1">
    <property type="nucleotide sequence ID" value="NM_001283853.1"/>
</dbReference>
<dbReference type="SMR" id="Q28478"/>
<dbReference type="STRING" id="9541.ENSMFAP00000014069"/>
<dbReference type="MEROPS" id="M12.950"/>
<dbReference type="GlyCosmos" id="Q28478">
    <property type="glycosylation" value="6 sites, No reported glycans"/>
</dbReference>
<dbReference type="eggNOG" id="KOG3607">
    <property type="taxonomic scope" value="Eukaryota"/>
</dbReference>
<dbReference type="Proteomes" id="UP000233100">
    <property type="component" value="Unplaced"/>
</dbReference>
<dbReference type="GO" id="GO:0005886">
    <property type="term" value="C:plasma membrane"/>
    <property type="evidence" value="ECO:0007669"/>
    <property type="project" value="TreeGrafter"/>
</dbReference>
<dbReference type="GO" id="GO:0004222">
    <property type="term" value="F:metalloendopeptidase activity"/>
    <property type="evidence" value="ECO:0007669"/>
    <property type="project" value="InterPro"/>
</dbReference>
<dbReference type="GO" id="GO:0007339">
    <property type="term" value="P:binding of sperm to zona pellucida"/>
    <property type="evidence" value="ECO:0007669"/>
    <property type="project" value="TreeGrafter"/>
</dbReference>
<dbReference type="GO" id="GO:0007155">
    <property type="term" value="P:cell adhesion"/>
    <property type="evidence" value="ECO:0007669"/>
    <property type="project" value="UniProtKB-KW"/>
</dbReference>
<dbReference type="GO" id="GO:0008584">
    <property type="term" value="P:male gonad development"/>
    <property type="evidence" value="ECO:0007669"/>
    <property type="project" value="TreeGrafter"/>
</dbReference>
<dbReference type="GO" id="GO:0006508">
    <property type="term" value="P:proteolysis"/>
    <property type="evidence" value="ECO:0007669"/>
    <property type="project" value="InterPro"/>
</dbReference>
<dbReference type="CDD" id="cd04269">
    <property type="entry name" value="ZnMc_adamalysin_II_like"/>
    <property type="match status" value="1"/>
</dbReference>
<dbReference type="FunFam" id="3.40.390.10:FF:000033">
    <property type="entry name" value="A disintegrin and metallopeptidase domain 18"/>
    <property type="match status" value="1"/>
</dbReference>
<dbReference type="FunFam" id="4.10.70.10:FF:000001">
    <property type="entry name" value="Disintegrin and metalloproteinase domain-containing protein 22"/>
    <property type="match status" value="1"/>
</dbReference>
<dbReference type="Gene3D" id="3.40.390.10">
    <property type="entry name" value="Collagenase (Catalytic Domain)"/>
    <property type="match status" value="1"/>
</dbReference>
<dbReference type="Gene3D" id="4.10.70.10">
    <property type="entry name" value="Disintegrin domain"/>
    <property type="match status" value="1"/>
</dbReference>
<dbReference type="InterPro" id="IPR006586">
    <property type="entry name" value="ADAM_Cys-rich"/>
</dbReference>
<dbReference type="InterPro" id="IPR018358">
    <property type="entry name" value="Disintegrin_CS"/>
</dbReference>
<dbReference type="InterPro" id="IPR001762">
    <property type="entry name" value="Disintegrin_dom"/>
</dbReference>
<dbReference type="InterPro" id="IPR036436">
    <property type="entry name" value="Disintegrin_dom_sf"/>
</dbReference>
<dbReference type="InterPro" id="IPR000742">
    <property type="entry name" value="EGF-like_dom"/>
</dbReference>
<dbReference type="InterPro" id="IPR024079">
    <property type="entry name" value="MetalloPept_cat_dom_sf"/>
</dbReference>
<dbReference type="InterPro" id="IPR001590">
    <property type="entry name" value="Peptidase_M12B"/>
</dbReference>
<dbReference type="InterPro" id="IPR002870">
    <property type="entry name" value="Peptidase_M12B_N"/>
</dbReference>
<dbReference type="InterPro" id="IPR034027">
    <property type="entry name" value="Reprolysin_adamalysin"/>
</dbReference>
<dbReference type="PANTHER" id="PTHR11905">
    <property type="entry name" value="ADAM A DISINTEGRIN AND METALLOPROTEASE DOMAIN"/>
    <property type="match status" value="1"/>
</dbReference>
<dbReference type="PANTHER" id="PTHR11905:SF108">
    <property type="entry name" value="DISINTEGRIN AND METALLOPROTEINASE DOMAIN-CONTAINING PROTEIN 2"/>
    <property type="match status" value="1"/>
</dbReference>
<dbReference type="Pfam" id="PF08516">
    <property type="entry name" value="ADAM_CR"/>
    <property type="match status" value="1"/>
</dbReference>
<dbReference type="Pfam" id="PF00200">
    <property type="entry name" value="Disintegrin"/>
    <property type="match status" value="1"/>
</dbReference>
<dbReference type="Pfam" id="PF01562">
    <property type="entry name" value="Pep_M12B_propep"/>
    <property type="match status" value="1"/>
</dbReference>
<dbReference type="Pfam" id="PF01421">
    <property type="entry name" value="Reprolysin"/>
    <property type="match status" value="1"/>
</dbReference>
<dbReference type="PRINTS" id="PR00289">
    <property type="entry name" value="DISINTEGRIN"/>
</dbReference>
<dbReference type="SMART" id="SM00608">
    <property type="entry name" value="ACR"/>
    <property type="match status" value="1"/>
</dbReference>
<dbReference type="SMART" id="SM00050">
    <property type="entry name" value="DISIN"/>
    <property type="match status" value="1"/>
</dbReference>
<dbReference type="SUPFAM" id="SSF57552">
    <property type="entry name" value="Blood coagulation inhibitor (disintegrin)"/>
    <property type="match status" value="1"/>
</dbReference>
<dbReference type="SUPFAM" id="SSF55486">
    <property type="entry name" value="Metalloproteases ('zincins'), catalytic domain"/>
    <property type="match status" value="1"/>
</dbReference>
<dbReference type="PROSITE" id="PS50215">
    <property type="entry name" value="ADAM_MEPRO"/>
    <property type="match status" value="1"/>
</dbReference>
<dbReference type="PROSITE" id="PS00427">
    <property type="entry name" value="DISINTEGRIN_1"/>
    <property type="match status" value="1"/>
</dbReference>
<dbReference type="PROSITE" id="PS50214">
    <property type="entry name" value="DISINTEGRIN_2"/>
    <property type="match status" value="1"/>
</dbReference>
<dbReference type="PROSITE" id="PS50026">
    <property type="entry name" value="EGF_3"/>
    <property type="match status" value="1"/>
</dbReference>
<accession>Q28478</accession>
<accession>Q28472</accession>
<accession>Q4R6R6</accession>
<gene>
    <name type="primary">ADAM2</name>
    <name type="synonym">FTNB</name>
    <name type="ORF">QtsA-17331</name>
</gene>
<proteinExistence type="evidence at transcript level"/>
<feature type="signal peptide" evidence="3">
    <location>
        <begin position="1"/>
        <end position="16"/>
    </location>
</feature>
<feature type="propeptide" id="PRO_0000029044" evidence="1">
    <location>
        <begin position="17"/>
        <end position="174"/>
    </location>
</feature>
<feature type="chain" id="PRO_0000029045" description="Disintegrin and metalloproteinase domain-containing protein 2">
    <location>
        <begin position="175"/>
        <end position="735"/>
    </location>
</feature>
<feature type="topological domain" description="Extracellular" evidence="3">
    <location>
        <begin position="17"/>
        <end position="686"/>
    </location>
</feature>
<feature type="transmembrane region" description="Helical" evidence="3">
    <location>
        <begin position="687"/>
        <end position="707"/>
    </location>
</feature>
<feature type="topological domain" description="Cytoplasmic" evidence="3">
    <location>
        <begin position="708"/>
        <end position="735"/>
    </location>
</feature>
<feature type="domain" description="Peptidase M12B" evidence="6">
    <location>
        <begin position="178"/>
        <end position="375"/>
    </location>
</feature>
<feature type="domain" description="Disintegrin" evidence="4">
    <location>
        <begin position="384"/>
        <end position="473"/>
    </location>
</feature>
<feature type="domain" description="EGF-like" evidence="5">
    <location>
        <begin position="612"/>
        <end position="645"/>
    </location>
</feature>
<feature type="modified residue" description="Phosphoserine" evidence="2">
    <location>
        <position position="729"/>
    </location>
</feature>
<feature type="glycosylation site" description="N-linked (GlcNAc...) asparagine" evidence="3">
    <location>
        <position position="76"/>
    </location>
</feature>
<feature type="glycosylation site" description="N-linked (GlcNAc...) asparagine" evidence="3">
    <location>
        <position position="122"/>
    </location>
</feature>
<feature type="glycosylation site" description="N-linked (GlcNAc...) asparagine" evidence="3">
    <location>
        <position position="220"/>
    </location>
</feature>
<feature type="glycosylation site" description="N-linked (GlcNAc...) asparagine" evidence="3">
    <location>
        <position position="353"/>
    </location>
</feature>
<feature type="glycosylation site" description="N-linked (GlcNAc...) asparagine" evidence="3">
    <location>
        <position position="459"/>
    </location>
</feature>
<feature type="glycosylation site" description="N-linked (GlcNAc...) asparagine" evidence="3">
    <location>
        <position position="566"/>
    </location>
</feature>
<feature type="disulfide bond" evidence="1">
    <location>
        <begin position="287"/>
        <end position="370"/>
    </location>
</feature>
<feature type="disulfide bond" evidence="1">
    <location>
        <begin position="329"/>
        <end position="354"/>
    </location>
</feature>
<feature type="disulfide bond" evidence="1">
    <location>
        <begin position="331"/>
        <end position="336"/>
    </location>
</feature>
<feature type="disulfide bond" evidence="1">
    <location>
        <begin position="445"/>
        <end position="465"/>
    </location>
</feature>
<feature type="disulfide bond" evidence="1">
    <location>
        <begin position="616"/>
        <end position="627"/>
    </location>
</feature>
<feature type="disulfide bond" evidence="1">
    <location>
        <begin position="621"/>
        <end position="633"/>
    </location>
</feature>
<feature type="disulfide bond" evidence="1">
    <location>
        <begin position="635"/>
        <end position="644"/>
    </location>
</feature>
<feature type="sequence conflict" description="In Ref. 3; BAE01208." evidence="7" ref="3">
    <original>F</original>
    <variation>S</variation>
    <location>
        <position position="65"/>
    </location>
</feature>
<feature type="sequence conflict" description="In Ref. 3; BAE01208." evidence="7" ref="3">
    <original>E</original>
    <variation>G</variation>
    <location>
        <position position="121"/>
    </location>
</feature>
<feature type="sequence conflict" description="In Ref. 3; BAE01208." evidence="7" ref="3">
    <original>L</original>
    <variation>P</variation>
    <location>
        <position position="225"/>
    </location>
</feature>
<feature type="sequence conflict" description="In Ref. 3; BAE01208." evidence="7" ref="3">
    <original>H</original>
    <variation>Y</variation>
    <location>
        <position position="681"/>
    </location>
</feature>
<feature type="sequence conflict" description="In Ref. 1; CAA54733." evidence="7" ref="1">
    <original>T</original>
    <variation>S</variation>
    <location>
        <position position="723"/>
    </location>
</feature>
<name>ADAM2_MACFA</name>
<comment type="function">
    <text evidence="1">Sperm surface membrane protein that may be involved in sperm-egg plasma membrane adhesion and fusion during fertilization. Could have a direct role in sperm-zona binding or migration of sperm from the uterus into the oviduct. Interactions with egg membrane could be mediated via binding between its disintegrin-like domain to one or more integrins receptors on the egg. This is a non catalytic metalloprotease-like protein (By similarity).</text>
</comment>
<comment type="subunit">
    <text>Heterodimer with ADAM1/fertilin subunit alpha.</text>
</comment>
<comment type="subcellular location">
    <subcellularLocation>
        <location>Membrane</location>
        <topology>Single-pass type I membrane protein</topology>
    </subcellularLocation>
</comment>
<comment type="tissue specificity">
    <text>Expressed specifically in testis.</text>
</comment>
<comment type="domain">
    <text evidence="1">A tripeptide motif (FDE) within disintegrin-like domain could be involved in the binding to egg integrin receptor and thus could mediate sperm/egg binding.</text>
</comment>
<comment type="PTM">
    <text evidence="1">The signal and the metalloprotease domain are cleaved during the epididymal maturation of the spermatozoa.</text>
</comment>